<name>ENDO2_BPT5</name>
<protein>
    <recommendedName>
        <fullName evidence="1">Putative endonuclease</fullName>
        <ecNumber evidence="4">3.1.-.-</ecNumber>
    </recommendedName>
</protein>
<feature type="chain" id="PRO_0000435553" description="Putative endonuclease">
    <location>
        <begin position="1"/>
        <end position="250"/>
    </location>
</feature>
<organismHost>
    <name type="scientific">Escherichia coli</name>
    <dbReference type="NCBI Taxonomy" id="562"/>
</organismHost>
<accession>Q6QGE6</accession>
<accession>Q5DMG4</accession>
<accession>Q66LS6</accession>
<dbReference type="EC" id="3.1.-.-" evidence="4"/>
<dbReference type="EMBL" id="AY543070">
    <property type="protein sequence ID" value="AAS77180.1"/>
    <property type="molecule type" value="Genomic_DNA"/>
</dbReference>
<dbReference type="EMBL" id="AY587007">
    <property type="protein sequence ID" value="AAX12067.1"/>
    <property type="status" value="ALT_INIT"/>
    <property type="molecule type" value="Genomic_DNA"/>
</dbReference>
<dbReference type="EMBL" id="AY692264">
    <property type="protein sequence ID" value="AAU05276.1"/>
    <property type="status" value="ALT_INIT"/>
    <property type="molecule type" value="Genomic_DNA"/>
</dbReference>
<dbReference type="RefSeq" id="YP_006969.1">
    <property type="nucleotide sequence ID" value="NC_005859.1"/>
</dbReference>
<dbReference type="GeneID" id="2777630"/>
<dbReference type="KEGG" id="vg:2777630"/>
<dbReference type="Proteomes" id="UP000002107">
    <property type="component" value="Genome"/>
</dbReference>
<dbReference type="Proteomes" id="UP000002141">
    <property type="component" value="Segment"/>
</dbReference>
<dbReference type="Proteomes" id="UP000002503">
    <property type="component" value="Segment"/>
</dbReference>
<dbReference type="GO" id="GO:0003677">
    <property type="term" value="F:DNA binding"/>
    <property type="evidence" value="ECO:0007669"/>
    <property type="project" value="UniProtKB-KW"/>
</dbReference>
<dbReference type="GO" id="GO:0004519">
    <property type="term" value="F:endonuclease activity"/>
    <property type="evidence" value="ECO:0007669"/>
    <property type="project" value="UniProtKB-KW"/>
</dbReference>
<dbReference type="InterPro" id="IPR048793">
    <property type="entry name" value="CapR_dom"/>
</dbReference>
<dbReference type="Pfam" id="PF21817">
    <property type="entry name" value="CapR"/>
    <property type="match status" value="2"/>
</dbReference>
<comment type="function">
    <text evidence="4">Putative endonuclease.</text>
</comment>
<comment type="induction">
    <text evidence="3">Expressed in the late phase of the viral replicative cycle.</text>
</comment>
<comment type="sequence caution" evidence="2">
    <conflict type="erroneous initiation">
        <sequence resource="EMBL-CDS" id="AAU05276"/>
    </conflict>
    <text>Extended N-terminus.</text>
</comment>
<comment type="sequence caution" evidence="2">
    <conflict type="erroneous initiation">
        <sequence resource="EMBL-CDS" id="AAX12067"/>
    </conflict>
    <text>Extended N-terminus.</text>
</comment>
<keyword id="KW-0238">DNA-binding</keyword>
<keyword id="KW-0255">Endonuclease</keyword>
<keyword id="KW-0378">Hydrolase</keyword>
<keyword id="KW-0426">Late protein</keyword>
<keyword id="KW-0540">Nuclease</keyword>
<keyword id="KW-1185">Reference proteome</keyword>
<evidence type="ECO:0000303" key="1">
    <source>
    </source>
</evidence>
<evidence type="ECO:0000305" key="2"/>
<evidence type="ECO:0000305" key="3">
    <source>
    </source>
</evidence>
<evidence type="ECO:0000305" key="4">
    <source>
    </source>
</evidence>
<evidence type="ECO:0000312" key="5">
    <source>
        <dbReference type="EMBL" id="AAS77180.1"/>
    </source>
</evidence>
<evidence type="ECO:0000312" key="6">
    <source>
        <dbReference type="EMBL" id="AAU05276.1"/>
    </source>
</evidence>
<evidence type="ECO:0000312" key="7">
    <source>
        <dbReference type="EMBL" id="AAX12067.1"/>
    </source>
</evidence>
<reference key="1">
    <citation type="submission" date="2004-01" db="EMBL/GenBank/DDBJ databases">
        <title>Bacteriophage T5 complete genome.</title>
        <authorList>
            <person name="Ksenzenko V.N."/>
            <person name="Kaliman A.V."/>
            <person name="Krutilina A.I."/>
            <person name="Shlyapnikov M.G."/>
        </authorList>
    </citation>
    <scope>NUCLEOTIDE SEQUENCE [LARGE SCALE GENOMIC DNA]</scope>
</reference>
<reference key="2">
    <citation type="journal article" date="2005" name="Virology">
        <title>Complete genome sequence of bacteriophage T5.</title>
        <authorList>
            <person name="Wang J."/>
            <person name="Jiang Y."/>
            <person name="Vincent M."/>
            <person name="Sun Y."/>
            <person name="Yu H."/>
            <person name="Wang J."/>
            <person name="Bao Q."/>
            <person name="Kong H."/>
            <person name="Hu S."/>
        </authorList>
    </citation>
    <scope>NUCLEOTIDE SEQUENCE [LARGE SCALE GENOMIC DNA]</scope>
    <scope>INDUCTION</scope>
    <source>
        <strain evidence="7">ATCC 11303-B5</strain>
    </source>
</reference>
<reference key="3">
    <citation type="journal article" date="2014" name="J. Virol.">
        <title>Insights into bacteriophage T5 structure from analysis of its morphogenesis genes and protein components.</title>
        <authorList>
            <person name="Zivanovic Y."/>
            <person name="Confalonieri F."/>
            <person name="Ponchon L."/>
            <person name="Lurz R."/>
            <person name="Chami M."/>
            <person name="Flayhan A."/>
            <person name="Renouard M."/>
            <person name="Huet A."/>
            <person name="Decottignies P."/>
            <person name="Davidson A.R."/>
            <person name="Breyton C."/>
            <person name="Boulanger P."/>
        </authorList>
    </citation>
    <scope>NUCLEOTIDE SEQUENCE [LARGE SCALE GENOMIC DNA]</scope>
    <scope>FUNCTION</scope>
    <source>
        <strain>St0 deletion mutant</strain>
    </source>
</reference>
<gene>
    <name evidence="5" type="ORF">T5.141</name>
    <name evidence="6" type="ORF">T5p137</name>
</gene>
<organism>
    <name type="scientific">Escherichia phage T5</name>
    <name type="common">Enterobacteria phage T5</name>
    <dbReference type="NCBI Taxonomy" id="2695836"/>
    <lineage>
        <taxon>Viruses</taxon>
        <taxon>Duplodnaviria</taxon>
        <taxon>Heunggongvirae</taxon>
        <taxon>Uroviricota</taxon>
        <taxon>Caudoviricetes</taxon>
        <taxon>Demerecviridae</taxon>
        <taxon>Markadamsvirinae</taxon>
        <taxon>Tequintavirus</taxon>
        <taxon>Tequintavirus T5</taxon>
    </lineage>
</organism>
<sequence length="250" mass="28590">MGKKITKQDRESQISNICNDKNLSFVGWIGEYTNIKSTLTLKCNKCYYTWSPRLDNFLRITAQKCPACAGKARWTKEEREEQIKSKCAEKGYNFLSWSSTYINKDSKIILKCLKDGCIWDVSIHHFINHDTGCPDCASGGFNPNIPATFYIQKLTYQGTHFLKFGITGKDVLERMRQQSNKSLCEHSVIFSHTFSYGSMARGLEKVVKDSVNTGVLDKRILPDGYTETCHYSELETILSLTNSFIQENIR</sequence>
<proteinExistence type="evidence at transcript level"/>